<name>ATPD_LYSSC</name>
<organism>
    <name type="scientific">Lysinibacillus sphaericus (strain C3-41)</name>
    <dbReference type="NCBI Taxonomy" id="444177"/>
    <lineage>
        <taxon>Bacteria</taxon>
        <taxon>Bacillati</taxon>
        <taxon>Bacillota</taxon>
        <taxon>Bacilli</taxon>
        <taxon>Bacillales</taxon>
        <taxon>Bacillaceae</taxon>
        <taxon>Lysinibacillus</taxon>
    </lineage>
</organism>
<gene>
    <name evidence="1" type="primary">atpH</name>
    <name type="ordered locus">Bsph_1013</name>
</gene>
<accession>B1HM53</accession>
<dbReference type="EMBL" id="CP000817">
    <property type="protein sequence ID" value="ACA38625.1"/>
    <property type="molecule type" value="Genomic_DNA"/>
</dbReference>
<dbReference type="RefSeq" id="WP_012292765.1">
    <property type="nucleotide sequence ID" value="NC_010382.1"/>
</dbReference>
<dbReference type="SMR" id="B1HM53"/>
<dbReference type="EnsemblBacteria" id="ACA38625">
    <property type="protein sequence ID" value="ACA38625"/>
    <property type="gene ID" value="Bsph_1013"/>
</dbReference>
<dbReference type="KEGG" id="lsp:Bsph_1013"/>
<dbReference type="HOGENOM" id="CLU_085114_4_1_9"/>
<dbReference type="Proteomes" id="UP000002164">
    <property type="component" value="Chromosome"/>
</dbReference>
<dbReference type="GO" id="GO:0005886">
    <property type="term" value="C:plasma membrane"/>
    <property type="evidence" value="ECO:0007669"/>
    <property type="project" value="UniProtKB-SubCell"/>
</dbReference>
<dbReference type="GO" id="GO:0045259">
    <property type="term" value="C:proton-transporting ATP synthase complex"/>
    <property type="evidence" value="ECO:0007669"/>
    <property type="project" value="UniProtKB-KW"/>
</dbReference>
<dbReference type="GO" id="GO:0046933">
    <property type="term" value="F:proton-transporting ATP synthase activity, rotational mechanism"/>
    <property type="evidence" value="ECO:0007669"/>
    <property type="project" value="UniProtKB-UniRule"/>
</dbReference>
<dbReference type="Gene3D" id="1.10.520.20">
    <property type="entry name" value="N-terminal domain of the delta subunit of the F1F0-ATP synthase"/>
    <property type="match status" value="1"/>
</dbReference>
<dbReference type="HAMAP" id="MF_01416">
    <property type="entry name" value="ATP_synth_delta_bact"/>
    <property type="match status" value="1"/>
</dbReference>
<dbReference type="InterPro" id="IPR026015">
    <property type="entry name" value="ATP_synth_OSCP/delta_N_sf"/>
</dbReference>
<dbReference type="InterPro" id="IPR020781">
    <property type="entry name" value="ATPase_OSCP/d_CS"/>
</dbReference>
<dbReference type="InterPro" id="IPR000711">
    <property type="entry name" value="ATPase_OSCP/dsu"/>
</dbReference>
<dbReference type="NCBIfam" id="TIGR01145">
    <property type="entry name" value="ATP_synt_delta"/>
    <property type="match status" value="1"/>
</dbReference>
<dbReference type="NCBIfam" id="NF004403">
    <property type="entry name" value="PRK05758.2-4"/>
    <property type="match status" value="1"/>
</dbReference>
<dbReference type="PANTHER" id="PTHR11910">
    <property type="entry name" value="ATP SYNTHASE DELTA CHAIN"/>
    <property type="match status" value="1"/>
</dbReference>
<dbReference type="Pfam" id="PF00213">
    <property type="entry name" value="OSCP"/>
    <property type="match status" value="1"/>
</dbReference>
<dbReference type="PRINTS" id="PR00125">
    <property type="entry name" value="ATPASEDELTA"/>
</dbReference>
<dbReference type="SUPFAM" id="SSF47928">
    <property type="entry name" value="N-terminal domain of the delta subunit of the F1F0-ATP synthase"/>
    <property type="match status" value="1"/>
</dbReference>
<dbReference type="PROSITE" id="PS00389">
    <property type="entry name" value="ATPASE_DELTA"/>
    <property type="match status" value="1"/>
</dbReference>
<keyword id="KW-0066">ATP synthesis</keyword>
<keyword id="KW-1003">Cell membrane</keyword>
<keyword id="KW-0139">CF(1)</keyword>
<keyword id="KW-0375">Hydrogen ion transport</keyword>
<keyword id="KW-0406">Ion transport</keyword>
<keyword id="KW-0472">Membrane</keyword>
<keyword id="KW-0813">Transport</keyword>
<evidence type="ECO:0000255" key="1">
    <source>
        <dbReference type="HAMAP-Rule" id="MF_01416"/>
    </source>
</evidence>
<reference key="1">
    <citation type="journal article" date="2008" name="J. Bacteriol.">
        <title>Complete genome sequence of the mosquitocidal bacterium Bacillus sphaericus C3-41 and comparison with those of closely related Bacillus species.</title>
        <authorList>
            <person name="Hu X."/>
            <person name="Fan W."/>
            <person name="Han B."/>
            <person name="Liu H."/>
            <person name="Zheng D."/>
            <person name="Li Q."/>
            <person name="Dong W."/>
            <person name="Yan J."/>
            <person name="Gao M."/>
            <person name="Berry C."/>
            <person name="Yuan Z."/>
        </authorList>
    </citation>
    <scope>NUCLEOTIDE SEQUENCE [LARGE SCALE GENOMIC DNA]</scope>
    <source>
        <strain>C3-41</strain>
    </source>
</reference>
<protein>
    <recommendedName>
        <fullName evidence="1">ATP synthase subunit delta</fullName>
    </recommendedName>
    <alternativeName>
        <fullName evidence="1">ATP synthase F(1) sector subunit delta</fullName>
    </alternativeName>
    <alternativeName>
        <fullName evidence="1">F-type ATPase subunit delta</fullName>
        <shortName evidence="1">F-ATPase subunit delta</shortName>
    </alternativeName>
</protein>
<sequence>MSNSAVAKRYAQALFELAQQKNILAEVGADLNELTKIVQESPDFLTLLNAPKFSIERKKQMVAEIFAGATPEVLHTVQLLVEKKRVNEVKLIANAYAELAAKAQGTADATVFSTRALSAEESANISTTFAKLVGKQSLNITNEIDPSLLGGIRVQIGNHIYDSSVANKLERLKRELIG</sequence>
<proteinExistence type="inferred from homology"/>
<feature type="chain" id="PRO_0000371020" description="ATP synthase subunit delta">
    <location>
        <begin position="1"/>
        <end position="178"/>
    </location>
</feature>
<comment type="function">
    <text evidence="1">F(1)F(0) ATP synthase produces ATP from ADP in the presence of a proton or sodium gradient. F-type ATPases consist of two structural domains, F(1) containing the extramembraneous catalytic core and F(0) containing the membrane proton channel, linked together by a central stalk and a peripheral stalk. During catalysis, ATP synthesis in the catalytic domain of F(1) is coupled via a rotary mechanism of the central stalk subunits to proton translocation.</text>
</comment>
<comment type="function">
    <text evidence="1">This protein is part of the stalk that links CF(0) to CF(1). It either transmits conformational changes from CF(0) to CF(1) or is implicated in proton conduction.</text>
</comment>
<comment type="subunit">
    <text evidence="1">F-type ATPases have 2 components, F(1) - the catalytic core - and F(0) - the membrane proton channel. F(1) has five subunits: alpha(3), beta(3), gamma(1), delta(1), epsilon(1). F(0) has three main subunits: a(1), b(2) and c(10-14). The alpha and beta chains form an alternating ring which encloses part of the gamma chain. F(1) is attached to F(0) by a central stalk formed by the gamma and epsilon chains, while a peripheral stalk is formed by the delta and b chains.</text>
</comment>
<comment type="subcellular location">
    <subcellularLocation>
        <location evidence="1">Cell membrane</location>
        <topology evidence="1">Peripheral membrane protein</topology>
    </subcellularLocation>
</comment>
<comment type="similarity">
    <text evidence="1">Belongs to the ATPase delta chain family.</text>
</comment>